<dbReference type="EMBL" id="U00061">
    <property type="protein sequence ID" value="AAB68375.1"/>
    <property type="molecule type" value="Genomic_DNA"/>
</dbReference>
<dbReference type="EMBL" id="AY558281">
    <property type="protein sequence ID" value="AAS56607.1"/>
    <property type="molecule type" value="Genomic_DNA"/>
</dbReference>
<dbReference type="EMBL" id="BK006934">
    <property type="protein sequence ID" value="DAA06764.1"/>
    <property type="molecule type" value="Genomic_DNA"/>
</dbReference>
<dbReference type="PIR" id="S46696">
    <property type="entry name" value="S46696"/>
</dbReference>
<dbReference type="RefSeq" id="NP_011938.1">
    <property type="nucleotide sequence ID" value="NM_001179201.1"/>
</dbReference>
<dbReference type="SMR" id="P38794"/>
<dbReference type="BioGRID" id="36503">
    <property type="interactions" value="83"/>
</dbReference>
<dbReference type="ComplexPortal" id="CPX-1696">
    <property type="entry name" value="PCL5-PHO85 kinase complex"/>
</dbReference>
<dbReference type="DIP" id="DIP-5804N"/>
<dbReference type="FunCoup" id="P38794">
    <property type="interactions" value="187"/>
</dbReference>
<dbReference type="IntAct" id="P38794">
    <property type="interactions" value="1"/>
</dbReference>
<dbReference type="STRING" id="4932.YHR071W"/>
<dbReference type="iPTMnet" id="P38794"/>
<dbReference type="PaxDb" id="4932-YHR071W"/>
<dbReference type="EnsemblFungi" id="YHR071W_mRNA">
    <property type="protein sequence ID" value="YHR071W"/>
    <property type="gene ID" value="YHR071W"/>
</dbReference>
<dbReference type="GeneID" id="856468"/>
<dbReference type="KEGG" id="sce:YHR071W"/>
<dbReference type="AGR" id="SGD:S000001113"/>
<dbReference type="SGD" id="S000001113">
    <property type="gene designation" value="PCL5"/>
</dbReference>
<dbReference type="VEuPathDB" id="FungiDB:YHR071W"/>
<dbReference type="eggNOG" id="KOG1674">
    <property type="taxonomic scope" value="Eukaryota"/>
</dbReference>
<dbReference type="HOGENOM" id="CLU_101101_0_0_1"/>
<dbReference type="InParanoid" id="P38794"/>
<dbReference type="OMA" id="DYDANSW"/>
<dbReference type="OrthoDB" id="286814at2759"/>
<dbReference type="BioCyc" id="YEAST:G3O-31121-MONOMER"/>
<dbReference type="BioGRID-ORCS" id="856468">
    <property type="hits" value="0 hits in 10 CRISPR screens"/>
</dbReference>
<dbReference type="PRO" id="PR:P38794"/>
<dbReference type="Proteomes" id="UP000002311">
    <property type="component" value="Chromosome VIII"/>
</dbReference>
<dbReference type="RNAct" id="P38794">
    <property type="molecule type" value="protein"/>
</dbReference>
<dbReference type="GO" id="GO:0000307">
    <property type="term" value="C:cyclin-dependent protein kinase holoenzyme complex"/>
    <property type="evidence" value="ECO:0000353"/>
    <property type="project" value="SGD"/>
</dbReference>
<dbReference type="GO" id="GO:0005634">
    <property type="term" value="C:nucleus"/>
    <property type="evidence" value="ECO:0000314"/>
    <property type="project" value="SGD"/>
</dbReference>
<dbReference type="GO" id="GO:0016538">
    <property type="term" value="F:cyclin-dependent protein serine/threonine kinase regulator activity"/>
    <property type="evidence" value="ECO:0000314"/>
    <property type="project" value="SGD"/>
</dbReference>
<dbReference type="GO" id="GO:0019901">
    <property type="term" value="F:protein kinase binding"/>
    <property type="evidence" value="ECO:0007669"/>
    <property type="project" value="InterPro"/>
</dbReference>
<dbReference type="GO" id="GO:0051301">
    <property type="term" value="P:cell division"/>
    <property type="evidence" value="ECO:0007669"/>
    <property type="project" value="UniProtKB-KW"/>
</dbReference>
<dbReference type="GO" id="GO:0016242">
    <property type="term" value="P:negative regulation of macroautophagy"/>
    <property type="evidence" value="ECO:0000315"/>
    <property type="project" value="SGD"/>
</dbReference>
<dbReference type="GO" id="GO:0031647">
    <property type="term" value="P:regulation of protein stability"/>
    <property type="evidence" value="ECO:0000315"/>
    <property type="project" value="SGD"/>
</dbReference>
<dbReference type="CDD" id="cd20557">
    <property type="entry name" value="CYCLIN_ScPCL1-like"/>
    <property type="match status" value="1"/>
</dbReference>
<dbReference type="Gene3D" id="1.10.472.10">
    <property type="entry name" value="Cyclin-like"/>
    <property type="match status" value="1"/>
</dbReference>
<dbReference type="InterPro" id="IPR036915">
    <property type="entry name" value="Cyclin-like_sf"/>
</dbReference>
<dbReference type="InterPro" id="IPR006671">
    <property type="entry name" value="Cyclin_N"/>
</dbReference>
<dbReference type="InterPro" id="IPR013922">
    <property type="entry name" value="Cyclin_PHO80-like"/>
</dbReference>
<dbReference type="PANTHER" id="PTHR15615">
    <property type="match status" value="1"/>
</dbReference>
<dbReference type="PANTHER" id="PTHR15615:SF36">
    <property type="entry name" value="PHO85 CYCLIN-5"/>
    <property type="match status" value="1"/>
</dbReference>
<dbReference type="Pfam" id="PF00134">
    <property type="entry name" value="Cyclin_N"/>
    <property type="match status" value="1"/>
</dbReference>
<dbReference type="SUPFAM" id="SSF47954">
    <property type="entry name" value="Cyclin-like"/>
    <property type="match status" value="1"/>
</dbReference>
<protein>
    <recommendedName>
        <fullName>PHO85 cyclin-5</fullName>
    </recommendedName>
    <alternativeName>
        <fullName>G1/S-specific cyclin PCL5</fullName>
    </alternativeName>
</protein>
<sequence>MDGNHRFTPDSKEFNTVVKSKESSTGRNPYQTPPLEHNGTHHQTNYSRKKTNLAIIISNFLSEISRPLSNGKINNSTHNILKFLNEVLKRSKCSKENAVLATFYFQKIHQSRGVRDESSLPEFSHCSRRIFLCCLILSHKFLNDNTYSMKNWQIISGLHAKDLSLMERWCLGKLNYELAIPYDEFLLWETNTLMKAKLRVGTPANAPVKRPRESDNDYDANSWKQIKSC</sequence>
<organism>
    <name type="scientific">Saccharomyces cerevisiae (strain ATCC 204508 / S288c)</name>
    <name type="common">Baker's yeast</name>
    <dbReference type="NCBI Taxonomy" id="559292"/>
    <lineage>
        <taxon>Eukaryota</taxon>
        <taxon>Fungi</taxon>
        <taxon>Dikarya</taxon>
        <taxon>Ascomycota</taxon>
        <taxon>Saccharomycotina</taxon>
        <taxon>Saccharomycetes</taxon>
        <taxon>Saccharomycetales</taxon>
        <taxon>Saccharomycetaceae</taxon>
        <taxon>Saccharomyces</taxon>
    </lineage>
</organism>
<gene>
    <name type="primary">PCL5</name>
    <name type="ordered locus">YHR071W</name>
    <name type="ORF">H8025.1</name>
</gene>
<proteinExistence type="evidence at protein level"/>
<comment type="function">
    <text evidence="2">Cyclin partner of the cyclin-dependent kinase (CDK) PHO85. Positively controls degradation of transcription factor GCN4 under favorable growth conditions. The PCL5-PHO85 cyclin-CDK holoenzyme phosphorylates GCN4, which is required for its degradation by the E3 ubiquitin ligase complex SCF(Cdc4). Amino acid starvation reduces PCL5-PHO85-associated GCN4 kinase activity and leads to stabilization of GCN4.</text>
</comment>
<comment type="subunit">
    <text>Forms a cyclin-CDK complex with PHO85.</text>
</comment>
<comment type="interaction">
    <interactant intactId="EBI-4504">
        <id>P38794</id>
    </interactant>
    <interactant intactId="EBI-13327">
        <id>P17157</id>
        <label>PHO85</label>
    </interactant>
    <organismsDiffer>false</organismsDiffer>
    <experiments>2</experiments>
</comment>
<comment type="induction">
    <text evidence="2">By transcription factor GCN4. Rapidly degraded under starvation conditions.</text>
</comment>
<comment type="similarity">
    <text evidence="3">Belongs to the cyclin family. PCL1,2 subfamily.</text>
</comment>
<accession>P38794</accession>
<accession>D3DL20</accession>
<reference key="1">
    <citation type="journal article" date="1994" name="Science">
        <title>Complete nucleotide sequence of Saccharomyces cerevisiae chromosome VIII.</title>
        <authorList>
            <person name="Johnston M."/>
            <person name="Andrews S."/>
            <person name="Brinkman R."/>
            <person name="Cooper J."/>
            <person name="Ding H."/>
            <person name="Dover J."/>
            <person name="Du Z."/>
            <person name="Favello A."/>
            <person name="Fulton L."/>
            <person name="Gattung S."/>
            <person name="Geisel C."/>
            <person name="Kirsten J."/>
            <person name="Kucaba T."/>
            <person name="Hillier L.W."/>
            <person name="Jier M."/>
            <person name="Johnston L."/>
            <person name="Langston Y."/>
            <person name="Latreille P."/>
            <person name="Louis E.J."/>
            <person name="Macri C."/>
            <person name="Mardis E."/>
            <person name="Menezes S."/>
            <person name="Mouser L."/>
            <person name="Nhan M."/>
            <person name="Rifkin L."/>
            <person name="Riles L."/>
            <person name="St Peter H."/>
            <person name="Trevaskis E."/>
            <person name="Vaughan K."/>
            <person name="Vignati D."/>
            <person name="Wilcox L."/>
            <person name="Wohldman P."/>
            <person name="Waterston R."/>
            <person name="Wilson R."/>
            <person name="Vaudin M."/>
        </authorList>
    </citation>
    <scope>NUCLEOTIDE SEQUENCE [LARGE SCALE GENOMIC DNA]</scope>
    <source>
        <strain>ATCC 204508 / S288c</strain>
    </source>
</reference>
<reference key="2">
    <citation type="journal article" date="2014" name="G3 (Bethesda)">
        <title>The reference genome sequence of Saccharomyces cerevisiae: Then and now.</title>
        <authorList>
            <person name="Engel S.R."/>
            <person name="Dietrich F.S."/>
            <person name="Fisk D.G."/>
            <person name="Binkley G."/>
            <person name="Balakrishnan R."/>
            <person name="Costanzo M.C."/>
            <person name="Dwight S.S."/>
            <person name="Hitz B.C."/>
            <person name="Karra K."/>
            <person name="Nash R.S."/>
            <person name="Weng S."/>
            <person name="Wong E.D."/>
            <person name="Lloyd P."/>
            <person name="Skrzypek M.S."/>
            <person name="Miyasato S.R."/>
            <person name="Simison M."/>
            <person name="Cherry J.M."/>
        </authorList>
    </citation>
    <scope>GENOME REANNOTATION</scope>
    <source>
        <strain>ATCC 204508 / S288c</strain>
    </source>
</reference>
<reference key="3">
    <citation type="journal article" date="2007" name="Genome Res.">
        <title>Approaching a complete repository of sequence-verified protein-encoding clones for Saccharomyces cerevisiae.</title>
        <authorList>
            <person name="Hu Y."/>
            <person name="Rolfs A."/>
            <person name="Bhullar B."/>
            <person name="Murthy T.V.S."/>
            <person name="Zhu C."/>
            <person name="Berger M.F."/>
            <person name="Camargo A.A."/>
            <person name="Kelley F."/>
            <person name="McCarron S."/>
            <person name="Jepson D."/>
            <person name="Richardson A."/>
            <person name="Raphael J."/>
            <person name="Moreira D."/>
            <person name="Taycher E."/>
            <person name="Zuo D."/>
            <person name="Mohr S."/>
            <person name="Kane M.F."/>
            <person name="Williamson J."/>
            <person name="Simpson A.J.G."/>
            <person name="Bulyk M.L."/>
            <person name="Harlow E."/>
            <person name="Marsischky G."/>
            <person name="Kolodner R.D."/>
            <person name="LaBaer J."/>
        </authorList>
    </citation>
    <scope>NUCLEOTIDE SEQUENCE [GENOMIC DNA]</scope>
    <source>
        <strain>ATCC 204508 / S288c</strain>
    </source>
</reference>
<reference key="4">
    <citation type="journal article" date="1997" name="Mol. Cell. Biol.">
        <title>A family of cyclin-like proteins that interact with the Pho85 cyclin-dependent kinase.</title>
        <authorList>
            <person name="Measday V."/>
            <person name="Moore L."/>
            <person name="Retnakaran R."/>
            <person name="Lee J."/>
            <person name="Donoviel M."/>
            <person name="Neiman A.M."/>
            <person name="Andrews B.J."/>
        </authorList>
    </citation>
    <scope>INTERACTION WITH PHO85</scope>
</reference>
<reference key="5">
    <citation type="journal article" date="2002" name="Mol. Cell. Biol.">
        <title>Regulation of the transcription factor Gcn4 by Pho85 cyclin PCL5.</title>
        <authorList>
            <person name="Shemer R."/>
            <person name="Meimoun A."/>
            <person name="Holtzman T."/>
            <person name="Kornitzer D."/>
        </authorList>
    </citation>
    <scope>FUNCTION</scope>
    <scope>INDUCTION</scope>
    <scope>PHOSPHORYLATION OF GCN4</scope>
</reference>
<evidence type="ECO:0000256" key="1">
    <source>
        <dbReference type="SAM" id="MobiDB-lite"/>
    </source>
</evidence>
<evidence type="ECO:0000269" key="2">
    <source>
    </source>
</evidence>
<evidence type="ECO:0000305" key="3"/>
<name>PCL5_YEAST</name>
<feature type="chain" id="PRO_0000080501" description="PHO85 cyclin-5">
    <location>
        <begin position="1"/>
        <end position="229"/>
    </location>
</feature>
<feature type="region of interest" description="Disordered" evidence="1">
    <location>
        <begin position="1"/>
        <end position="46"/>
    </location>
</feature>
<feature type="compositionally biased region" description="Basic and acidic residues" evidence="1">
    <location>
        <begin position="1"/>
        <end position="24"/>
    </location>
</feature>
<keyword id="KW-0131">Cell cycle</keyword>
<keyword id="KW-0132">Cell division</keyword>
<keyword id="KW-0195">Cyclin</keyword>
<keyword id="KW-1185">Reference proteome</keyword>